<reference key="1">
    <citation type="journal article" date="1986" name="Science">
        <title>Novel serine proteases encoded by two cytotoxic T lymphocyte-specific genes.</title>
        <authorList>
            <person name="Lobe C.G."/>
            <person name="Finlay B.B."/>
            <person name="Paranchych W."/>
            <person name="Paetkau V.H."/>
            <person name="Bleackley R.C."/>
        </authorList>
    </citation>
    <scope>NUCLEOTIDE SEQUENCE [MRNA]</scope>
</reference>
<reference key="2">
    <citation type="journal article" date="1988" name="Biochemistry">
        <title>Organization of two genes encoding cytotoxic T lymphocyte-specific serine proteases CCPI and CCPII.</title>
        <authorList>
            <person name="Lobe C.G."/>
            <person name="Upton C."/>
            <person name="Duggan B."/>
            <person name="Ehrman N."/>
            <person name="Letellier M."/>
            <person name="Bell J."/>
            <person name="McFadden G."/>
            <person name="Bleackley R.C."/>
        </authorList>
    </citation>
    <scope>NUCLEOTIDE SEQUENCE [GENOMIC DNA]</scope>
</reference>
<reference key="3">
    <citation type="journal article" date="1986" name="Nature">
        <title>The inducible cytotoxic T-lymphocyte-associated gene transcript CTLA-1 sequence and gene localization to mouse chromosome 14.</title>
        <authorList>
            <person name="Brunet J.-F."/>
            <person name="Dosseto M."/>
            <person name="Denizot F."/>
            <person name="Mattei M.-G."/>
            <person name="Clark W.R."/>
            <person name="Haqqi T.M."/>
            <person name="Ferrier P."/>
            <person name="Nabholz M."/>
            <person name="Schmitt-Verhulst A.-M."/>
            <person name="Luciani M.-F."/>
            <person name="Golstein P."/>
        </authorList>
    </citation>
    <scope>NUCLEOTIDE SEQUENCE [MRNA]</scope>
</reference>
<reference key="4">
    <citation type="journal article" date="2004" name="Genome Res.">
        <title>The status, quality, and expansion of the NIH full-length cDNA project: the Mammalian Gene Collection (MGC).</title>
        <authorList>
            <consortium name="The MGC Project Team"/>
        </authorList>
    </citation>
    <scope>NUCLEOTIDE SEQUENCE [LARGE SCALE MRNA]</scope>
    <source>
        <strain>FVB/N</strain>
        <tissue>Mammary gland</tissue>
    </source>
</reference>
<reference key="5">
    <citation type="journal article" date="1994" name="Mamm. Genome">
        <title>Genetic mapping of 40 cDNA clones on the mouse genome by PCR.</title>
        <authorList>
            <person name="Ko M.S."/>
            <person name="Wang X."/>
            <person name="Horton J.H."/>
            <person name="Hagen M.D."/>
            <person name="Takahashi N."/>
            <person name="Maezaki Y."/>
            <person name="Nadeau J.H."/>
        </authorList>
    </citation>
    <scope>NUCLEOTIDE SEQUENCE OF 227-247</scope>
    <source>
        <strain>C57BL/6J</strain>
    </source>
</reference>
<reference key="6">
    <citation type="journal article" date="1987" name="Cell">
        <title>A family of serine esterases in lytic granules of cytolytic T lymphocytes.</title>
        <authorList>
            <person name="Masson D."/>
            <person name="Tschopp J."/>
        </authorList>
    </citation>
    <scope>PROTEIN SEQUENCE OF 21-40</scope>
</reference>
<reference key="7">
    <citation type="journal article" date="2022" name="Nature">
        <title>Caspase-7 activates ASM to repair gasdermin and perforin pores.</title>
        <authorList>
            <person name="Nozaki K."/>
            <person name="Maltez V.I."/>
            <person name="Rayamajhi M."/>
            <person name="Tubbs A.L."/>
            <person name="Mitchell J.E."/>
            <person name="Lacey C.A."/>
            <person name="Harvest C.K."/>
            <person name="Li L."/>
            <person name="Nash W.T."/>
            <person name="Larson H.N."/>
            <person name="McGlaughon B.D."/>
            <person name="Moorman N.J."/>
            <person name="Brown M.G."/>
            <person name="Whitmire J.K."/>
            <person name="Miao E.A."/>
        </authorList>
    </citation>
    <scope>FUNCTION</scope>
    <scope>CATALYTIC ACTIVITY</scope>
</reference>
<reference key="8">
    <citation type="journal article" date="1988" name="Proteins">
        <title>Comparative molecular model building of two serine proteinases from cytotoxic T lymphocytes.</title>
        <authorList>
            <person name="Murphy M.E.P."/>
            <person name="Moult J."/>
            <person name="Bleackley R.C."/>
            <person name="Gershenfeld H."/>
            <person name="Weissman I.L."/>
            <person name="James M.N.G."/>
        </authorList>
    </citation>
    <scope>3D-STRUCTURE MODELING</scope>
</reference>
<sequence>MKILLLLLTLSLASRTKAGEIIGGHEVKPHSRPYMALLSIKDQQPEAICGGFLIREDFVLTAAHCEGSIINVTLGAHNIKEQEKTQQVIPMVKCIPHPDYNPKTFSNDIMLLKLKSKAKRTRAVRPLNLPRRNVNVKPGDVCYVAGWGRMAPMGKYSNTLQEVELTVQKDRECESYFKNRYNKTNQICAGDPKTKRASFRGDSGGPLVCKKVAAGIVSYGYKDGSPPRAFTKVSSFLSWIKKTMKSS</sequence>
<gene>
    <name type="primary">Gzmb</name>
    <name type="synonym">Ctla-1</name>
    <name type="synonym">Ctla1</name>
</gene>
<protein>
    <recommendedName>
        <fullName>Granzyme B(G,H)</fullName>
        <ecNumber evidence="6">3.4.21.79</ecNumber>
    </recommendedName>
    <alternativeName>
        <fullName>CTLA-1</fullName>
    </alternativeName>
    <alternativeName>
        <fullName>Cytotoxic cell protease 1</fullName>
        <shortName>CCP1</shortName>
    </alternativeName>
    <alternativeName>
        <fullName>Fragmentin-2</fullName>
    </alternativeName>
</protein>
<evidence type="ECO:0000250" key="1">
    <source>
        <dbReference type="UniProtKB" id="P10144"/>
    </source>
</evidence>
<evidence type="ECO:0000250" key="2">
    <source>
        <dbReference type="UniProtKB" id="P18291"/>
    </source>
</evidence>
<evidence type="ECO:0000255" key="3"/>
<evidence type="ECO:0000255" key="4">
    <source>
        <dbReference type="PROSITE-ProRule" id="PRU00274"/>
    </source>
</evidence>
<evidence type="ECO:0000269" key="5">
    <source>
    </source>
</evidence>
<evidence type="ECO:0000269" key="6">
    <source>
    </source>
</evidence>
<keyword id="KW-0053">Apoptosis</keyword>
<keyword id="KW-0204">Cytolysis</keyword>
<keyword id="KW-0903">Direct protein sequencing</keyword>
<keyword id="KW-1015">Disulfide bond</keyword>
<keyword id="KW-0325">Glycoprotein</keyword>
<keyword id="KW-0378">Hydrolase</keyword>
<keyword id="KW-0458">Lysosome</keyword>
<keyword id="KW-0645">Protease</keyword>
<keyword id="KW-1185">Reference proteome</keyword>
<keyword id="KW-0964">Secreted</keyword>
<keyword id="KW-0720">Serine protease</keyword>
<keyword id="KW-0732">Signal</keyword>
<keyword id="KW-0865">Zymogen</keyword>
<dbReference type="EC" id="3.4.21.79" evidence="6"/>
<dbReference type="EMBL" id="X04072">
    <property type="protein sequence ID" value="CAA27715.1"/>
    <property type="molecule type" value="mRNA"/>
</dbReference>
<dbReference type="EMBL" id="M12302">
    <property type="protein sequence ID" value="AAA37383.1"/>
    <property type="molecule type" value="mRNA"/>
</dbReference>
<dbReference type="EMBL" id="M22526">
    <property type="protein sequence ID" value="AAB61756.1"/>
    <property type="molecule type" value="Genomic_DNA"/>
</dbReference>
<dbReference type="EMBL" id="BC002085">
    <property type="protein sequence ID" value="AAH02085.1"/>
    <property type="molecule type" value="mRNA"/>
</dbReference>
<dbReference type="EMBL" id="U05707">
    <property type="protein sequence ID" value="AAB60470.1"/>
    <property type="molecule type" value="Genomic_DNA"/>
</dbReference>
<dbReference type="CCDS" id="CCDS27147.1"/>
<dbReference type="PIR" id="A94288">
    <property type="entry name" value="PRMSCL"/>
</dbReference>
<dbReference type="RefSeq" id="NP_038570.1">
    <property type="nucleotide sequence ID" value="NM_013542.3"/>
</dbReference>
<dbReference type="SMR" id="P04187"/>
<dbReference type="BioGRID" id="200135">
    <property type="interactions" value="6"/>
</dbReference>
<dbReference type="FunCoup" id="P04187">
    <property type="interactions" value="599"/>
</dbReference>
<dbReference type="STRING" id="10090.ENSMUSP00000015581"/>
<dbReference type="MEROPS" id="S01.136"/>
<dbReference type="GlyCosmos" id="P04187">
    <property type="glycosylation" value="2 sites, No reported glycans"/>
</dbReference>
<dbReference type="GlyGen" id="P04187">
    <property type="glycosylation" value="2 sites"/>
</dbReference>
<dbReference type="iPTMnet" id="P04187"/>
<dbReference type="PhosphoSitePlus" id="P04187"/>
<dbReference type="jPOST" id="P04187"/>
<dbReference type="PaxDb" id="10090-ENSMUSP00000015581"/>
<dbReference type="PeptideAtlas" id="P04187"/>
<dbReference type="ProteomicsDB" id="271286"/>
<dbReference type="DNASU" id="14939"/>
<dbReference type="Ensembl" id="ENSMUST00000015581.6">
    <property type="protein sequence ID" value="ENSMUSP00000015581.5"/>
    <property type="gene ID" value="ENSMUSG00000015437.6"/>
</dbReference>
<dbReference type="GeneID" id="14939"/>
<dbReference type="KEGG" id="mmu:14939"/>
<dbReference type="UCSC" id="uc007ubv.1">
    <property type="organism name" value="mouse"/>
</dbReference>
<dbReference type="AGR" id="MGI:109267"/>
<dbReference type="CTD" id="3002"/>
<dbReference type="MGI" id="MGI:109267">
    <property type="gene designation" value="Gzmb"/>
</dbReference>
<dbReference type="VEuPathDB" id="HostDB:ENSMUSG00000015437"/>
<dbReference type="eggNOG" id="KOG3627">
    <property type="taxonomic scope" value="Eukaryota"/>
</dbReference>
<dbReference type="GeneTree" id="ENSGT01030000234551"/>
<dbReference type="HOGENOM" id="CLU_006842_1_0_1"/>
<dbReference type="InParanoid" id="P04187"/>
<dbReference type="OMA" id="PAYNPEK"/>
<dbReference type="OrthoDB" id="5565075at2759"/>
<dbReference type="PhylomeDB" id="P04187"/>
<dbReference type="TreeFam" id="TF333630"/>
<dbReference type="BRENDA" id="3.4.21.79">
    <property type="organism ID" value="3474"/>
</dbReference>
<dbReference type="Reactome" id="R-MMU-5620971">
    <property type="pathway name" value="Pyroptosis"/>
</dbReference>
<dbReference type="Reactome" id="R-MMU-75108">
    <property type="pathway name" value="Activation, myristolyation of BID and translocation to mitochondria"/>
</dbReference>
<dbReference type="BioGRID-ORCS" id="14939">
    <property type="hits" value="1 hit in 80 CRISPR screens"/>
</dbReference>
<dbReference type="ChiTaRS" id="Gzmb">
    <property type="organism name" value="mouse"/>
</dbReference>
<dbReference type="PRO" id="PR:P04187"/>
<dbReference type="Proteomes" id="UP000000589">
    <property type="component" value="Chromosome 14"/>
</dbReference>
<dbReference type="RNAct" id="P04187">
    <property type="molecule type" value="protein"/>
</dbReference>
<dbReference type="Bgee" id="ENSMUSG00000015437">
    <property type="expression patterns" value="Expressed in gastrula and 37 other cell types or tissues"/>
</dbReference>
<dbReference type="ExpressionAtlas" id="P04187">
    <property type="expression patterns" value="baseline and differential"/>
</dbReference>
<dbReference type="GO" id="GO:0044194">
    <property type="term" value="C:cytolytic granule"/>
    <property type="evidence" value="ECO:0000314"/>
    <property type="project" value="MGI"/>
</dbReference>
<dbReference type="GO" id="GO:0005737">
    <property type="term" value="C:cytoplasm"/>
    <property type="evidence" value="ECO:0000314"/>
    <property type="project" value="MGI"/>
</dbReference>
<dbReference type="GO" id="GO:0005829">
    <property type="term" value="C:cytosol"/>
    <property type="evidence" value="ECO:0000304"/>
    <property type="project" value="Reactome"/>
</dbReference>
<dbReference type="GO" id="GO:0005615">
    <property type="term" value="C:extracellular space"/>
    <property type="evidence" value="ECO:0000314"/>
    <property type="project" value="MGI"/>
</dbReference>
<dbReference type="GO" id="GO:0004252">
    <property type="term" value="F:serine-type endopeptidase activity"/>
    <property type="evidence" value="ECO:0000314"/>
    <property type="project" value="UniProtKB"/>
</dbReference>
<dbReference type="GO" id="GO:0008236">
    <property type="term" value="F:serine-type peptidase activity"/>
    <property type="evidence" value="ECO:0000314"/>
    <property type="project" value="MGI"/>
</dbReference>
<dbReference type="GO" id="GO:0006915">
    <property type="term" value="P:apoptotic process"/>
    <property type="evidence" value="ECO:0007669"/>
    <property type="project" value="UniProtKB-KW"/>
</dbReference>
<dbReference type="GO" id="GO:0042742">
    <property type="term" value="P:defense response to bacterium"/>
    <property type="evidence" value="ECO:0000314"/>
    <property type="project" value="UniProt"/>
</dbReference>
<dbReference type="GO" id="GO:0140507">
    <property type="term" value="P:granzyme-mediated programmed cell death signaling pathway"/>
    <property type="evidence" value="ECO:0000314"/>
    <property type="project" value="MGI"/>
</dbReference>
<dbReference type="GO" id="GO:0031640">
    <property type="term" value="P:killing of cells of another organism"/>
    <property type="evidence" value="ECO:0007669"/>
    <property type="project" value="UniProtKB-KW"/>
</dbReference>
<dbReference type="GO" id="GO:0042267">
    <property type="term" value="P:natural killer cell mediated cytotoxicity"/>
    <property type="evidence" value="ECO:0000250"/>
    <property type="project" value="UniProtKB"/>
</dbReference>
<dbReference type="GO" id="GO:0051604">
    <property type="term" value="P:protein maturation"/>
    <property type="evidence" value="ECO:0000314"/>
    <property type="project" value="UniProt"/>
</dbReference>
<dbReference type="GO" id="GO:0051603">
    <property type="term" value="P:proteolysis involved in protein catabolic process"/>
    <property type="evidence" value="ECO:0000250"/>
    <property type="project" value="UniProtKB"/>
</dbReference>
<dbReference type="GO" id="GO:0070269">
    <property type="term" value="P:pyroptotic inflammatory response"/>
    <property type="evidence" value="ECO:0000250"/>
    <property type="project" value="UniProtKB"/>
</dbReference>
<dbReference type="GO" id="GO:0001913">
    <property type="term" value="P:T cell mediated cytotoxicity"/>
    <property type="evidence" value="ECO:0000315"/>
    <property type="project" value="MGI"/>
</dbReference>
<dbReference type="CDD" id="cd00190">
    <property type="entry name" value="Tryp_SPc"/>
    <property type="match status" value="1"/>
</dbReference>
<dbReference type="FunFam" id="2.40.10.10:FF:000120">
    <property type="entry name" value="Putative serine protease"/>
    <property type="match status" value="1"/>
</dbReference>
<dbReference type="Gene3D" id="2.40.10.10">
    <property type="entry name" value="Trypsin-like serine proteases"/>
    <property type="match status" value="2"/>
</dbReference>
<dbReference type="InterPro" id="IPR009003">
    <property type="entry name" value="Peptidase_S1_PA"/>
</dbReference>
<dbReference type="InterPro" id="IPR043504">
    <property type="entry name" value="Peptidase_S1_PA_chymotrypsin"/>
</dbReference>
<dbReference type="InterPro" id="IPR001314">
    <property type="entry name" value="Peptidase_S1A"/>
</dbReference>
<dbReference type="InterPro" id="IPR001254">
    <property type="entry name" value="Trypsin_dom"/>
</dbReference>
<dbReference type="InterPro" id="IPR018114">
    <property type="entry name" value="TRYPSIN_HIS"/>
</dbReference>
<dbReference type="InterPro" id="IPR033116">
    <property type="entry name" value="TRYPSIN_SER"/>
</dbReference>
<dbReference type="PANTHER" id="PTHR24271:SF81">
    <property type="entry name" value="GRANZYME B"/>
    <property type="match status" value="1"/>
</dbReference>
<dbReference type="PANTHER" id="PTHR24271">
    <property type="entry name" value="KALLIKREIN-RELATED"/>
    <property type="match status" value="1"/>
</dbReference>
<dbReference type="Pfam" id="PF00089">
    <property type="entry name" value="Trypsin"/>
    <property type="match status" value="1"/>
</dbReference>
<dbReference type="PRINTS" id="PR00722">
    <property type="entry name" value="CHYMOTRYPSIN"/>
</dbReference>
<dbReference type="SMART" id="SM00020">
    <property type="entry name" value="Tryp_SPc"/>
    <property type="match status" value="1"/>
</dbReference>
<dbReference type="SUPFAM" id="SSF50494">
    <property type="entry name" value="Trypsin-like serine proteases"/>
    <property type="match status" value="1"/>
</dbReference>
<dbReference type="PROSITE" id="PS50240">
    <property type="entry name" value="TRYPSIN_DOM"/>
    <property type="match status" value="1"/>
</dbReference>
<dbReference type="PROSITE" id="PS00134">
    <property type="entry name" value="TRYPSIN_HIS"/>
    <property type="match status" value="1"/>
</dbReference>
<dbReference type="PROSITE" id="PS00135">
    <property type="entry name" value="TRYPSIN_SER"/>
    <property type="match status" value="1"/>
</dbReference>
<comment type="function">
    <text evidence="1 6">Abundant protease in the cytosolic granules of cytotoxic T-cells and NK-cells which activates caspase-independent pyroptosis when delivered into the target cell through the immunological synapse (PubMed:35705808). It cleaves after Asp (PubMed:35705808). Once delivered into the target cell, acts by catalyzing cleavage of gasdermin-E (GSDME), releasing the pore-forming moiety of GSDME, thereby triggering pyroptosis and target cell death (By similarity). Seems to be linked to an activation cascade of caspases (aspartate-specific cysteine proteases) responsible for apoptosis execution (By similarity). Cleaves caspase-3 and -9 (CASP3 and CASP9, respectively) to give rise to active enzymes mediating apoptosis (PubMed:35705808). Cleaves and activates CASP7 in response to bacterial infection, promoting plasma membrane repair (PubMed:35705808).</text>
</comment>
<comment type="catalytic activity">
    <reaction evidence="6">
        <text>Preferential cleavage: -Asp-|-Xaa- &gt;&gt; -Asn-|-Xaa- &gt; -Met-|-Xaa-, -Ser-|-Xaa-.</text>
        <dbReference type="EC" id="3.4.21.79"/>
    </reaction>
</comment>
<comment type="activity regulation">
    <text evidence="1">Inactivated by the serine protease inhibitor diisopropylfluorophosphate.</text>
</comment>
<comment type="subcellular location">
    <subcellularLocation>
        <location evidence="1">Secreted</location>
    </subcellularLocation>
    <subcellularLocation>
        <location evidence="1">Cytolytic granule</location>
    </subcellularLocation>
    <text evidence="1">Delivered into the target cell by perforin.</text>
</comment>
<comment type="similarity">
    <text evidence="4">Belongs to the peptidase S1 family. Granzyme subfamily.</text>
</comment>
<proteinExistence type="evidence at protein level"/>
<feature type="signal peptide" evidence="3">
    <location>
        <begin position="1"/>
        <end position="18"/>
    </location>
</feature>
<feature type="propeptide" id="PRO_0000027401" description="Activation peptide" evidence="5">
    <location>
        <begin position="19"/>
        <end position="20"/>
    </location>
</feature>
<feature type="chain" id="PRO_0000027402" description="Granzyme B(G,H)">
    <location>
        <begin position="21"/>
        <end position="247"/>
    </location>
</feature>
<feature type="domain" description="Peptidase S1" evidence="4">
    <location>
        <begin position="21"/>
        <end position="245"/>
    </location>
</feature>
<feature type="active site" description="Charge relay system" evidence="2">
    <location>
        <position position="64"/>
    </location>
</feature>
<feature type="active site" description="Charge relay system" evidence="2">
    <location>
        <position position="108"/>
    </location>
</feature>
<feature type="active site" description="Charge relay system" evidence="2">
    <location>
        <position position="203"/>
    </location>
</feature>
<feature type="site" description="Mediates preference for Asp-containing substrates" evidence="2">
    <location>
        <position position="228"/>
    </location>
</feature>
<feature type="glycosylation site" description="N-linked (GlcNAc...) asparagine" evidence="3">
    <location>
        <position position="71"/>
    </location>
</feature>
<feature type="glycosylation site" description="N-linked (GlcNAc...) asparagine" evidence="3">
    <location>
        <position position="182"/>
    </location>
</feature>
<feature type="disulfide bond" evidence="4">
    <location>
        <begin position="49"/>
        <end position="65"/>
    </location>
</feature>
<feature type="disulfide bond" evidence="4">
    <location>
        <begin position="142"/>
        <end position="209"/>
    </location>
</feature>
<feature type="disulfide bond" evidence="4">
    <location>
        <begin position="173"/>
        <end position="188"/>
    </location>
</feature>
<organism>
    <name type="scientific">Mus musculus</name>
    <name type="common">Mouse</name>
    <dbReference type="NCBI Taxonomy" id="10090"/>
    <lineage>
        <taxon>Eukaryota</taxon>
        <taxon>Metazoa</taxon>
        <taxon>Chordata</taxon>
        <taxon>Craniata</taxon>
        <taxon>Vertebrata</taxon>
        <taxon>Euteleostomi</taxon>
        <taxon>Mammalia</taxon>
        <taxon>Eutheria</taxon>
        <taxon>Euarchontoglires</taxon>
        <taxon>Glires</taxon>
        <taxon>Rodentia</taxon>
        <taxon>Myomorpha</taxon>
        <taxon>Muroidea</taxon>
        <taxon>Muridae</taxon>
        <taxon>Murinae</taxon>
        <taxon>Mus</taxon>
        <taxon>Mus</taxon>
    </lineage>
</organism>
<accession>P04187</accession>
<name>GRAB_MOUSE</name>